<protein>
    <recommendedName>
        <fullName evidence="1">Deoxyguanosinetriphosphate triphosphohydrolase-like protein</fullName>
    </recommendedName>
</protein>
<name>DGTL1_VIBPA</name>
<gene>
    <name type="ordered locus">VP0925</name>
</gene>
<comment type="similarity">
    <text evidence="1">Belongs to the dGTPase family. Type 2 subfamily.</text>
</comment>
<organism>
    <name type="scientific">Vibrio parahaemolyticus serotype O3:K6 (strain RIMD 2210633)</name>
    <dbReference type="NCBI Taxonomy" id="223926"/>
    <lineage>
        <taxon>Bacteria</taxon>
        <taxon>Pseudomonadati</taxon>
        <taxon>Pseudomonadota</taxon>
        <taxon>Gammaproteobacteria</taxon>
        <taxon>Vibrionales</taxon>
        <taxon>Vibrionaceae</taxon>
        <taxon>Vibrio</taxon>
    </lineage>
</organism>
<reference key="1">
    <citation type="journal article" date="2003" name="Lancet">
        <title>Genome sequence of Vibrio parahaemolyticus: a pathogenic mechanism distinct from that of V. cholerae.</title>
        <authorList>
            <person name="Makino K."/>
            <person name="Oshima K."/>
            <person name="Kurokawa K."/>
            <person name="Yokoyama K."/>
            <person name="Uda T."/>
            <person name="Tagomori K."/>
            <person name="Iijima Y."/>
            <person name="Najima M."/>
            <person name="Nakano M."/>
            <person name="Yamashita A."/>
            <person name="Kubota Y."/>
            <person name="Kimura S."/>
            <person name="Yasunaga T."/>
            <person name="Honda T."/>
            <person name="Shinagawa H."/>
            <person name="Hattori M."/>
            <person name="Iida T."/>
        </authorList>
    </citation>
    <scope>NUCLEOTIDE SEQUENCE [LARGE SCALE GENOMIC DNA]</scope>
    <source>
        <strain>RIMD 2210633</strain>
    </source>
</reference>
<feature type="chain" id="PRO_0000205324" description="Deoxyguanosinetriphosphate triphosphohydrolase-like protein">
    <location>
        <begin position="1"/>
        <end position="440"/>
    </location>
</feature>
<feature type="domain" description="HD" evidence="2">
    <location>
        <begin position="62"/>
        <end position="255"/>
    </location>
</feature>
<accession>Q87R73</accession>
<dbReference type="EMBL" id="BA000031">
    <property type="protein sequence ID" value="BAC59188.1"/>
    <property type="molecule type" value="Genomic_DNA"/>
</dbReference>
<dbReference type="RefSeq" id="NP_797304.1">
    <property type="nucleotide sequence ID" value="NC_004603.1"/>
</dbReference>
<dbReference type="SMR" id="Q87R73"/>
<dbReference type="KEGG" id="vpa:VP0925"/>
<dbReference type="PATRIC" id="fig|223926.6.peg.877"/>
<dbReference type="eggNOG" id="COG0232">
    <property type="taxonomic scope" value="Bacteria"/>
</dbReference>
<dbReference type="HOGENOM" id="CLU_028163_0_0_6"/>
<dbReference type="Proteomes" id="UP000002493">
    <property type="component" value="Chromosome 1"/>
</dbReference>
<dbReference type="GO" id="GO:0008832">
    <property type="term" value="F:dGTPase activity"/>
    <property type="evidence" value="ECO:0007669"/>
    <property type="project" value="TreeGrafter"/>
</dbReference>
<dbReference type="GO" id="GO:0006203">
    <property type="term" value="P:dGTP catabolic process"/>
    <property type="evidence" value="ECO:0007669"/>
    <property type="project" value="TreeGrafter"/>
</dbReference>
<dbReference type="Gene3D" id="1.10.3210.10">
    <property type="entry name" value="Hypothetical protein af1432"/>
    <property type="match status" value="1"/>
</dbReference>
<dbReference type="HAMAP" id="MF_01212">
    <property type="entry name" value="dGTPase_type2"/>
    <property type="match status" value="1"/>
</dbReference>
<dbReference type="InterPro" id="IPR006261">
    <property type="entry name" value="dGTPase"/>
</dbReference>
<dbReference type="InterPro" id="IPR050135">
    <property type="entry name" value="dGTPase-like"/>
</dbReference>
<dbReference type="InterPro" id="IPR023023">
    <property type="entry name" value="dNTPase_2"/>
</dbReference>
<dbReference type="InterPro" id="IPR003607">
    <property type="entry name" value="HD/PDEase_dom"/>
</dbReference>
<dbReference type="InterPro" id="IPR006674">
    <property type="entry name" value="HD_domain"/>
</dbReference>
<dbReference type="InterPro" id="IPR026875">
    <property type="entry name" value="PHydrolase_assoc_dom"/>
</dbReference>
<dbReference type="NCBIfam" id="NF041026">
    <property type="entry name" value="antiphage_dGTPase"/>
    <property type="match status" value="1"/>
</dbReference>
<dbReference type="NCBIfam" id="TIGR01353">
    <property type="entry name" value="dGTP_triPase"/>
    <property type="match status" value="1"/>
</dbReference>
<dbReference type="NCBIfam" id="NF003701">
    <property type="entry name" value="PRK05318.1"/>
    <property type="match status" value="1"/>
</dbReference>
<dbReference type="PANTHER" id="PTHR11373:SF40">
    <property type="entry name" value="DEOXYGUANOSINETRIPHOSPHATE TRIPHOSPHOHYDROLASE-LIKE PROTEIN 2"/>
    <property type="match status" value="1"/>
</dbReference>
<dbReference type="PANTHER" id="PTHR11373">
    <property type="entry name" value="DEOXYNUCLEOSIDE TRIPHOSPHATE TRIPHOSPHOHYDROLASE"/>
    <property type="match status" value="1"/>
</dbReference>
<dbReference type="Pfam" id="PF13286">
    <property type="entry name" value="HD_assoc"/>
    <property type="match status" value="1"/>
</dbReference>
<dbReference type="SMART" id="SM00471">
    <property type="entry name" value="HDc"/>
    <property type="match status" value="1"/>
</dbReference>
<dbReference type="SUPFAM" id="SSF109604">
    <property type="entry name" value="HD-domain/PDEase-like"/>
    <property type="match status" value="1"/>
</dbReference>
<dbReference type="PROSITE" id="PS51831">
    <property type="entry name" value="HD"/>
    <property type="match status" value="1"/>
</dbReference>
<proteinExistence type="inferred from homology"/>
<keyword id="KW-0378">Hydrolase</keyword>
<evidence type="ECO:0000255" key="1">
    <source>
        <dbReference type="HAMAP-Rule" id="MF_01212"/>
    </source>
</evidence>
<evidence type="ECO:0000255" key="2">
    <source>
        <dbReference type="PROSITE-ProRule" id="PRU01175"/>
    </source>
</evidence>
<sequence>MSFELHSLWQERHDDEHKIRRDDHRSPYQRDRARILHSAAFRRLQAKTQVHGNSLEDFHRSRLTHSLEAAQLGTGIVAQLKKKQSEFKELLPSDSLIDSLCLAHDIGHPPYGHGGEVALNYMMRDHGGFEGNAQTFRIVTKLEPYTEHFGMNLSRRTLLGLIKYPALISQTRSVKLPNPAEHQRRLKAKEWSPAKGIYDCDKDLFDWVIAPLSENDKSLLSQMRYRPDSDLEHSKTRFKSLDCSIMELADDIAYGVHDLEDAIVLGMVTRQQWQEGAASQLADCGDPWFEEHIGSIGQMLFSGKHHQRKDAIGGMVNALLTSISIKVVDEPFQNPLLAWNACLEPHMAKALDVLKHFVSQYVIQVPQVQIVEYKGQQIIMDIFEALSADPERLLPIHTKELWQSATSDSGKMRVIADYISAMTDGHAQKLHRQLFSSIVL</sequence>